<organism>
    <name type="scientific">Solanum lycopersicum</name>
    <name type="common">Tomato</name>
    <name type="synonym">Lycopersicon esculentum</name>
    <dbReference type="NCBI Taxonomy" id="4081"/>
    <lineage>
        <taxon>Eukaryota</taxon>
        <taxon>Viridiplantae</taxon>
        <taxon>Streptophyta</taxon>
        <taxon>Embryophyta</taxon>
        <taxon>Tracheophyta</taxon>
        <taxon>Spermatophyta</taxon>
        <taxon>Magnoliopsida</taxon>
        <taxon>eudicotyledons</taxon>
        <taxon>Gunneridae</taxon>
        <taxon>Pentapetalae</taxon>
        <taxon>asterids</taxon>
        <taxon>lamiids</taxon>
        <taxon>Solanales</taxon>
        <taxon>Solanaceae</taxon>
        <taxon>Solanoideae</taxon>
        <taxon>Solaneae</taxon>
        <taxon>Solanum</taxon>
        <taxon>Solanum subgen. Lycopersicon</taxon>
    </lineage>
</organism>
<comment type="function">
    <text evidence="1">Succinyl-CoA synthetase functions in the citric acid cycle (TCA), coupling the hydrolysis of succinyl-CoA to the synthesis of ATP and thus represents the only step of substrate-level phosphorylation in the TCA. The beta subunit provides nucleotide specificity of the enzyme and binds the substrate succinate, while the binding sites for coenzyme A and phosphate are found in the alpha subunit.</text>
</comment>
<comment type="catalytic activity">
    <reaction evidence="1 2">
        <text>succinate + ATP + CoA = succinyl-CoA + ADP + phosphate</text>
        <dbReference type="Rhea" id="RHEA:17661"/>
        <dbReference type="ChEBI" id="CHEBI:30031"/>
        <dbReference type="ChEBI" id="CHEBI:30616"/>
        <dbReference type="ChEBI" id="CHEBI:43474"/>
        <dbReference type="ChEBI" id="CHEBI:57287"/>
        <dbReference type="ChEBI" id="CHEBI:57292"/>
        <dbReference type="ChEBI" id="CHEBI:456216"/>
        <dbReference type="EC" id="6.2.1.5"/>
    </reaction>
</comment>
<comment type="cofactor">
    <cofactor evidence="1">
        <name>Mg(2+)</name>
        <dbReference type="ChEBI" id="CHEBI:18420"/>
    </cofactor>
    <text evidence="1">Binds 1 Mg(2+) ion per subunit.</text>
</comment>
<comment type="pathway">
    <text evidence="1">Carbohydrate metabolism; tricarboxylic acid cycle; succinate from succinyl-CoA (ligase route): step 1/1.</text>
</comment>
<comment type="subunit">
    <text evidence="1">Heterodimer of an alpha and a beta subunit.</text>
</comment>
<comment type="subcellular location">
    <subcellularLocation>
        <location evidence="1 2">Mitochondrion</location>
    </subcellularLocation>
</comment>
<comment type="tissue specificity">
    <text evidence="2">Expressed in roots, stems, flowers, leaves and fruits.</text>
</comment>
<comment type="similarity">
    <text evidence="1">Belongs to the succinate/malate CoA ligase beta subunit family.</text>
</comment>
<accession>Q84LB6</accession>
<proteinExistence type="evidence at protein level"/>
<sequence length="417" mass="44840">MLRKLANQSLSVAGKWQQQQLRRLNIHEYQGAELMSKYGINVPKGVAVASLDEVKKAIQDVFPNQSEVVVKSQVLAGGRGLGTFKNGFQGGVHIVKADQAEDIASKMLGQILVTKQTGAQGKVVSKVYLCEKMSLVNEMYFSIILDRATAGPLIIACRKGGTSIEDLAEKFPDMIIKVPIDVFKGISDADAAKVVDGLAPKVADRNDSIEQVKKLYKLFCETDCTMLEINPLAETSDNKLVAADAKLNFDDNAAYRQKEIFSLRDSSQEDPREVAAAKADLNYIGLDGEIGCMVNGAGLAMATMDIIKLHGGTPANFLDVGGNATEGQVVEAFKILTADEKVKAILVNIFGGIMKCDVIASGIVNAAKQVQLKVPVIVRLEGTNVEQGKRILKESGMKLITAEDLDDAAEKAVKALA</sequence>
<protein>
    <recommendedName>
        <fullName evidence="1">Succinate--CoA ligase [ADP-forming] subunit beta, mitochondrial</fullName>
        <ecNumber evidence="1">6.2.1.5</ecNumber>
    </recommendedName>
    <alternativeName>
        <fullName evidence="1">Succinyl-CoA synthetase beta chain</fullName>
        <shortName evidence="1">SCS-beta</shortName>
    </alternativeName>
</protein>
<evidence type="ECO:0000255" key="1">
    <source>
        <dbReference type="HAMAP-Rule" id="MF_03219"/>
    </source>
</evidence>
<evidence type="ECO:0000269" key="2">
    <source>
    </source>
</evidence>
<dbReference type="EC" id="6.2.1.5" evidence="1"/>
<dbReference type="EMBL" id="AY180975">
    <property type="protein sequence ID" value="AAO22150.1"/>
    <property type="molecule type" value="mRNA"/>
</dbReference>
<dbReference type="SMR" id="Q84LB6"/>
<dbReference type="FunCoup" id="Q84LB6">
    <property type="interactions" value="3417"/>
</dbReference>
<dbReference type="STRING" id="4081.Q84LB6"/>
<dbReference type="PaxDb" id="4081-Solyc06g083790.2.1"/>
<dbReference type="eggNOG" id="KOG2799">
    <property type="taxonomic scope" value="Eukaryota"/>
</dbReference>
<dbReference type="InParanoid" id="Q84LB6"/>
<dbReference type="UniPathway" id="UPA00223">
    <property type="reaction ID" value="UER00999"/>
</dbReference>
<dbReference type="Proteomes" id="UP000004994">
    <property type="component" value="Unplaced"/>
</dbReference>
<dbReference type="ExpressionAtlas" id="Q84LB6">
    <property type="expression patterns" value="baseline and differential"/>
</dbReference>
<dbReference type="GO" id="GO:0005739">
    <property type="term" value="C:mitochondrion"/>
    <property type="evidence" value="ECO:0000314"/>
    <property type="project" value="UniProtKB"/>
</dbReference>
<dbReference type="GO" id="GO:0042709">
    <property type="term" value="C:succinate-CoA ligase complex"/>
    <property type="evidence" value="ECO:0000318"/>
    <property type="project" value="GO_Central"/>
</dbReference>
<dbReference type="GO" id="GO:0005524">
    <property type="term" value="F:ATP binding"/>
    <property type="evidence" value="ECO:0007669"/>
    <property type="project" value="UniProtKB-UniRule"/>
</dbReference>
<dbReference type="GO" id="GO:0000287">
    <property type="term" value="F:magnesium ion binding"/>
    <property type="evidence" value="ECO:0007669"/>
    <property type="project" value="UniProtKB-UniRule"/>
</dbReference>
<dbReference type="GO" id="GO:0004775">
    <property type="term" value="F:succinate-CoA ligase (ADP-forming) activity"/>
    <property type="evidence" value="ECO:0000314"/>
    <property type="project" value="UniProtKB"/>
</dbReference>
<dbReference type="GO" id="GO:0006105">
    <property type="term" value="P:succinate metabolic process"/>
    <property type="evidence" value="ECO:0000314"/>
    <property type="project" value="UniProtKB"/>
</dbReference>
<dbReference type="GO" id="GO:0006104">
    <property type="term" value="P:succinyl-CoA metabolic process"/>
    <property type="evidence" value="ECO:0000314"/>
    <property type="project" value="UniProtKB"/>
</dbReference>
<dbReference type="GO" id="GO:0006099">
    <property type="term" value="P:tricarboxylic acid cycle"/>
    <property type="evidence" value="ECO:0000314"/>
    <property type="project" value="UniProtKB"/>
</dbReference>
<dbReference type="FunFam" id="3.30.470.20:FF:000002">
    <property type="entry name" value="Succinate--CoA ligase [ADP-forming] subunit beta"/>
    <property type="match status" value="1"/>
</dbReference>
<dbReference type="FunFam" id="3.40.50.261:FF:000001">
    <property type="entry name" value="Succinate--CoA ligase [ADP-forming] subunit beta"/>
    <property type="match status" value="1"/>
</dbReference>
<dbReference type="FunFam" id="3.30.1490.20:FF:000019">
    <property type="entry name" value="Succinate--CoA ligase [ADP-forming] subunit beta, mitochondrial"/>
    <property type="match status" value="1"/>
</dbReference>
<dbReference type="Gene3D" id="3.30.1490.20">
    <property type="entry name" value="ATP-grasp fold, A domain"/>
    <property type="match status" value="1"/>
</dbReference>
<dbReference type="Gene3D" id="3.30.470.20">
    <property type="entry name" value="ATP-grasp fold, B domain"/>
    <property type="match status" value="1"/>
</dbReference>
<dbReference type="Gene3D" id="3.40.50.261">
    <property type="entry name" value="Succinyl-CoA synthetase domains"/>
    <property type="match status" value="1"/>
</dbReference>
<dbReference type="HAMAP" id="MF_00558">
    <property type="entry name" value="Succ_CoA_beta"/>
    <property type="match status" value="1"/>
</dbReference>
<dbReference type="InterPro" id="IPR011761">
    <property type="entry name" value="ATP-grasp"/>
</dbReference>
<dbReference type="InterPro" id="IPR013650">
    <property type="entry name" value="ATP-grasp_succ-CoA_synth-type"/>
</dbReference>
<dbReference type="InterPro" id="IPR013815">
    <property type="entry name" value="ATP_grasp_subdomain_1"/>
</dbReference>
<dbReference type="InterPro" id="IPR017866">
    <property type="entry name" value="Succ-CoA_synthase_bsu_CS"/>
</dbReference>
<dbReference type="InterPro" id="IPR005811">
    <property type="entry name" value="SUCC_ACL_C"/>
</dbReference>
<dbReference type="InterPro" id="IPR005809">
    <property type="entry name" value="Succ_CoA_ligase-like_bsu"/>
</dbReference>
<dbReference type="InterPro" id="IPR016102">
    <property type="entry name" value="Succinyl-CoA_synth-like"/>
</dbReference>
<dbReference type="NCBIfam" id="NF001913">
    <property type="entry name" value="PRK00696.1"/>
    <property type="match status" value="1"/>
</dbReference>
<dbReference type="NCBIfam" id="TIGR01016">
    <property type="entry name" value="sucCoAbeta"/>
    <property type="match status" value="1"/>
</dbReference>
<dbReference type="PANTHER" id="PTHR11815:SF10">
    <property type="entry name" value="SUCCINATE--COA LIGASE [GDP-FORMING] SUBUNIT BETA, MITOCHONDRIAL"/>
    <property type="match status" value="1"/>
</dbReference>
<dbReference type="PANTHER" id="PTHR11815">
    <property type="entry name" value="SUCCINYL-COA SYNTHETASE BETA CHAIN"/>
    <property type="match status" value="1"/>
</dbReference>
<dbReference type="Pfam" id="PF08442">
    <property type="entry name" value="ATP-grasp_2"/>
    <property type="match status" value="1"/>
</dbReference>
<dbReference type="Pfam" id="PF00549">
    <property type="entry name" value="Ligase_CoA"/>
    <property type="match status" value="1"/>
</dbReference>
<dbReference type="PIRSF" id="PIRSF001554">
    <property type="entry name" value="SucCS_beta"/>
    <property type="match status" value="1"/>
</dbReference>
<dbReference type="SUPFAM" id="SSF56059">
    <property type="entry name" value="Glutathione synthetase ATP-binding domain-like"/>
    <property type="match status" value="1"/>
</dbReference>
<dbReference type="SUPFAM" id="SSF52210">
    <property type="entry name" value="Succinyl-CoA synthetase domains"/>
    <property type="match status" value="1"/>
</dbReference>
<dbReference type="PROSITE" id="PS50975">
    <property type="entry name" value="ATP_GRASP"/>
    <property type="match status" value="1"/>
</dbReference>
<dbReference type="PROSITE" id="PS01217">
    <property type="entry name" value="SUCCINYL_COA_LIG_3"/>
    <property type="match status" value="1"/>
</dbReference>
<reference key="1">
    <citation type="journal article" date="2005" name="Plant Mol. Biol.">
        <title>Identification and characterisation of the alpha and beta subunits of succinyl CoA ligase of tomato.</title>
        <authorList>
            <person name="Studart-Guimaraes C."/>
            <person name="Gibon Y."/>
            <person name="Frankel N."/>
            <person name="Wood C.C."/>
            <person name="Zanor M.I."/>
            <person name="Fernie A.R."/>
            <person name="Carrari F."/>
        </authorList>
    </citation>
    <scope>NUCLEOTIDE SEQUENCE [MRNA]</scope>
    <scope>CATALYTIC ACTIVITY</scope>
    <scope>SUBCELLULAR LOCATION</scope>
    <scope>TISSUE SPECIFICITY</scope>
    <source>
        <strain>cv. Moneymaker</strain>
        <tissue>Shoot</tissue>
    </source>
</reference>
<name>SUCB_SOLLC</name>
<feature type="transit peptide" description="Mitochondrion" evidence="1">
    <location>
        <begin position="1"/>
        <end position="24"/>
    </location>
</feature>
<feature type="chain" id="PRO_0000402566" description="Succinate--CoA ligase [ADP-forming] subunit beta, mitochondrial" evidence="1">
    <location>
        <begin position="25"/>
        <end position="417"/>
    </location>
</feature>
<feature type="domain" description="ATP-grasp" evidence="1">
    <location>
        <begin position="32"/>
        <end position="275"/>
    </location>
</feature>
<feature type="binding site" evidence="1">
    <location>
        <position position="71"/>
    </location>
    <ligand>
        <name>ATP</name>
        <dbReference type="ChEBI" id="CHEBI:30616"/>
    </ligand>
</feature>
<feature type="binding site" evidence="1">
    <location>
        <begin position="78"/>
        <end position="80"/>
    </location>
    <ligand>
        <name>ATP</name>
        <dbReference type="ChEBI" id="CHEBI:30616"/>
    </ligand>
</feature>
<feature type="binding site" evidence="1">
    <location>
        <position position="138"/>
    </location>
    <ligand>
        <name>ATP</name>
        <dbReference type="ChEBI" id="CHEBI:30616"/>
    </ligand>
</feature>
<feature type="binding site" evidence="1">
    <location>
        <position position="230"/>
    </location>
    <ligand>
        <name>Mg(2+)</name>
        <dbReference type="ChEBI" id="CHEBI:18420"/>
    </ligand>
</feature>
<feature type="binding site" evidence="1">
    <location>
        <position position="244"/>
    </location>
    <ligand>
        <name>Mg(2+)</name>
        <dbReference type="ChEBI" id="CHEBI:18420"/>
    </ligand>
</feature>
<feature type="binding site" evidence="1">
    <location>
        <position position="295"/>
    </location>
    <ligand>
        <name>substrate</name>
        <note>ligand shared with subunit alpha</note>
    </ligand>
</feature>
<feature type="binding site" evidence="1">
    <location>
        <begin position="352"/>
        <end position="354"/>
    </location>
    <ligand>
        <name>substrate</name>
        <note>ligand shared with subunit alpha</note>
    </ligand>
</feature>
<keyword id="KW-0067">ATP-binding</keyword>
<keyword id="KW-0436">Ligase</keyword>
<keyword id="KW-0460">Magnesium</keyword>
<keyword id="KW-0479">Metal-binding</keyword>
<keyword id="KW-0496">Mitochondrion</keyword>
<keyword id="KW-0547">Nucleotide-binding</keyword>
<keyword id="KW-1185">Reference proteome</keyword>
<keyword id="KW-0809">Transit peptide</keyword>
<keyword id="KW-0816">Tricarboxylic acid cycle</keyword>